<protein>
    <recommendedName>
        <fullName evidence="1">Small ribosomal subunit protein uS3</fullName>
    </recommendedName>
    <alternativeName>
        <fullName evidence="2">30S ribosomal protein S3</fullName>
    </alternativeName>
</protein>
<accession>C4K7B2</accession>
<name>RS3_HAMD5</name>
<reference key="1">
    <citation type="journal article" date="2009" name="Proc. Natl. Acad. Sci. U.S.A.">
        <title>Hamiltonella defensa, genome evolution of protective bacterial endosymbiont from pathogenic ancestors.</title>
        <authorList>
            <person name="Degnan P.H."/>
            <person name="Yu Y."/>
            <person name="Sisneros N."/>
            <person name="Wing R.A."/>
            <person name="Moran N.A."/>
        </authorList>
    </citation>
    <scope>NUCLEOTIDE SEQUENCE [LARGE SCALE GENOMIC DNA]</scope>
    <source>
        <strain>5AT</strain>
    </source>
</reference>
<comment type="function">
    <text evidence="1">Binds the lower part of the 30S subunit head. Binds mRNA in the 70S ribosome, positioning it for translation.</text>
</comment>
<comment type="subunit">
    <text evidence="1">Part of the 30S ribosomal subunit. Forms a tight complex with proteins S10 and S14.</text>
</comment>
<comment type="similarity">
    <text evidence="1">Belongs to the universal ribosomal protein uS3 family.</text>
</comment>
<dbReference type="EMBL" id="CP001277">
    <property type="protein sequence ID" value="ACQ68455.1"/>
    <property type="molecule type" value="Genomic_DNA"/>
</dbReference>
<dbReference type="RefSeq" id="WP_015874219.1">
    <property type="nucleotide sequence ID" value="NC_012751.1"/>
</dbReference>
<dbReference type="SMR" id="C4K7B2"/>
<dbReference type="STRING" id="572265.HDEF_1860"/>
<dbReference type="GeneID" id="66261445"/>
<dbReference type="KEGG" id="hde:HDEF_1860"/>
<dbReference type="eggNOG" id="COG0092">
    <property type="taxonomic scope" value="Bacteria"/>
</dbReference>
<dbReference type="HOGENOM" id="CLU_058591_0_2_6"/>
<dbReference type="Proteomes" id="UP000002334">
    <property type="component" value="Chromosome"/>
</dbReference>
<dbReference type="GO" id="GO:0022627">
    <property type="term" value="C:cytosolic small ribosomal subunit"/>
    <property type="evidence" value="ECO:0007669"/>
    <property type="project" value="TreeGrafter"/>
</dbReference>
<dbReference type="GO" id="GO:0003729">
    <property type="term" value="F:mRNA binding"/>
    <property type="evidence" value="ECO:0007669"/>
    <property type="project" value="UniProtKB-UniRule"/>
</dbReference>
<dbReference type="GO" id="GO:0019843">
    <property type="term" value="F:rRNA binding"/>
    <property type="evidence" value="ECO:0007669"/>
    <property type="project" value="UniProtKB-UniRule"/>
</dbReference>
<dbReference type="GO" id="GO:0003735">
    <property type="term" value="F:structural constituent of ribosome"/>
    <property type="evidence" value="ECO:0007669"/>
    <property type="project" value="InterPro"/>
</dbReference>
<dbReference type="GO" id="GO:0006412">
    <property type="term" value="P:translation"/>
    <property type="evidence" value="ECO:0007669"/>
    <property type="project" value="UniProtKB-UniRule"/>
</dbReference>
<dbReference type="CDD" id="cd02412">
    <property type="entry name" value="KH-II_30S_S3"/>
    <property type="match status" value="1"/>
</dbReference>
<dbReference type="FunFam" id="3.30.1140.32:FF:000001">
    <property type="entry name" value="30S ribosomal protein S3"/>
    <property type="match status" value="1"/>
</dbReference>
<dbReference type="FunFam" id="3.30.300.20:FF:000001">
    <property type="entry name" value="30S ribosomal protein S3"/>
    <property type="match status" value="1"/>
</dbReference>
<dbReference type="Gene3D" id="3.30.300.20">
    <property type="match status" value="1"/>
</dbReference>
<dbReference type="Gene3D" id="3.30.1140.32">
    <property type="entry name" value="Ribosomal protein S3, C-terminal domain"/>
    <property type="match status" value="1"/>
</dbReference>
<dbReference type="HAMAP" id="MF_01309_B">
    <property type="entry name" value="Ribosomal_uS3_B"/>
    <property type="match status" value="1"/>
</dbReference>
<dbReference type="InterPro" id="IPR004087">
    <property type="entry name" value="KH_dom"/>
</dbReference>
<dbReference type="InterPro" id="IPR015946">
    <property type="entry name" value="KH_dom-like_a/b"/>
</dbReference>
<dbReference type="InterPro" id="IPR004044">
    <property type="entry name" value="KH_dom_type_2"/>
</dbReference>
<dbReference type="InterPro" id="IPR009019">
    <property type="entry name" value="KH_sf_prok-type"/>
</dbReference>
<dbReference type="InterPro" id="IPR036419">
    <property type="entry name" value="Ribosomal_S3_C_sf"/>
</dbReference>
<dbReference type="InterPro" id="IPR005704">
    <property type="entry name" value="Ribosomal_uS3_bac-typ"/>
</dbReference>
<dbReference type="InterPro" id="IPR001351">
    <property type="entry name" value="Ribosomal_uS3_C"/>
</dbReference>
<dbReference type="InterPro" id="IPR018280">
    <property type="entry name" value="Ribosomal_uS3_CS"/>
</dbReference>
<dbReference type="NCBIfam" id="TIGR01009">
    <property type="entry name" value="rpsC_bact"/>
    <property type="match status" value="1"/>
</dbReference>
<dbReference type="PANTHER" id="PTHR11760">
    <property type="entry name" value="30S/40S RIBOSOMAL PROTEIN S3"/>
    <property type="match status" value="1"/>
</dbReference>
<dbReference type="PANTHER" id="PTHR11760:SF19">
    <property type="entry name" value="SMALL RIBOSOMAL SUBUNIT PROTEIN US3C"/>
    <property type="match status" value="1"/>
</dbReference>
<dbReference type="Pfam" id="PF07650">
    <property type="entry name" value="KH_2"/>
    <property type="match status" value="1"/>
</dbReference>
<dbReference type="Pfam" id="PF00189">
    <property type="entry name" value="Ribosomal_S3_C"/>
    <property type="match status" value="1"/>
</dbReference>
<dbReference type="SMART" id="SM00322">
    <property type="entry name" value="KH"/>
    <property type="match status" value="1"/>
</dbReference>
<dbReference type="SUPFAM" id="SSF54814">
    <property type="entry name" value="Prokaryotic type KH domain (KH-domain type II)"/>
    <property type="match status" value="1"/>
</dbReference>
<dbReference type="SUPFAM" id="SSF54821">
    <property type="entry name" value="Ribosomal protein S3 C-terminal domain"/>
    <property type="match status" value="1"/>
</dbReference>
<dbReference type="PROSITE" id="PS50823">
    <property type="entry name" value="KH_TYPE_2"/>
    <property type="match status" value="1"/>
</dbReference>
<dbReference type="PROSITE" id="PS00548">
    <property type="entry name" value="RIBOSOMAL_S3"/>
    <property type="match status" value="1"/>
</dbReference>
<organism>
    <name type="scientific">Hamiltonella defensa subsp. Acyrthosiphon pisum (strain 5AT)</name>
    <dbReference type="NCBI Taxonomy" id="572265"/>
    <lineage>
        <taxon>Bacteria</taxon>
        <taxon>Pseudomonadati</taxon>
        <taxon>Pseudomonadota</taxon>
        <taxon>Gammaproteobacteria</taxon>
        <taxon>Enterobacterales</taxon>
        <taxon>Enterobacteriaceae</taxon>
        <taxon>aphid secondary symbionts</taxon>
        <taxon>Candidatus Hamiltonella</taxon>
    </lineage>
</organism>
<evidence type="ECO:0000255" key="1">
    <source>
        <dbReference type="HAMAP-Rule" id="MF_01309"/>
    </source>
</evidence>
<evidence type="ECO:0000305" key="2"/>
<keyword id="KW-0687">Ribonucleoprotein</keyword>
<keyword id="KW-0689">Ribosomal protein</keyword>
<keyword id="KW-0694">RNA-binding</keyword>
<keyword id="KW-0699">rRNA-binding</keyword>
<proteinExistence type="inferred from homology"/>
<feature type="chain" id="PRO_1000214343" description="Small ribosomal subunit protein uS3">
    <location>
        <begin position="1"/>
        <end position="233"/>
    </location>
</feature>
<feature type="domain" description="KH type-2" evidence="1">
    <location>
        <begin position="39"/>
        <end position="107"/>
    </location>
</feature>
<gene>
    <name evidence="1" type="primary">rpsC</name>
    <name type="ordered locus">HDEF_1860</name>
</gene>
<sequence length="233" mass="26533">MGQKVHPKIIRLGIIKYWLSTWYANTKEFAENLQGDFKVRQFLTKELSKASISHVVIERPPKSIRVTIYTARPGIVIGKKGEDVEKLRKRVALIAGVPAQINTYEIRKPELDPKLVADGITSQLERRVMFRRAMKRAVQNTMRAGAKGIKVEVSGRLGGAEIARTEWYREGRVPLHTLRADIDYDTSEAHTTYGVIGVKVWIFKGEILGTVLPFKQAEQPKQQQRKGRSKENR</sequence>